<name>ZN813_HUMAN</name>
<proteinExistence type="evidence at protein level"/>
<gene>
    <name type="primary">ZNF813</name>
</gene>
<evidence type="ECO:0000255" key="1">
    <source>
        <dbReference type="PROSITE-ProRule" id="PRU00042"/>
    </source>
</evidence>
<evidence type="ECO:0000255" key="2">
    <source>
        <dbReference type="PROSITE-ProRule" id="PRU00119"/>
    </source>
</evidence>
<evidence type="ECO:0000305" key="3"/>
<sequence length="617" mass="71721">MALPQGLLTFRDVAIEFSQEEWKCLDPAQRTLYRDVMLENYRNLVSLDISSKCMMKEFSSTAQGNREVIHTGTLQRHESHHTGDFRFQEIDKDIHNLEFQWQEDERNSHEAPMTEIKKLTGSADRYDQRHAGNKPIKDQLGSSFHSHLPELHMFQTQGKIGNQVEKSINDASSISTSQRISCRPKTHISNNYGNNFRNSSLLTQKQEVHMREKSFQCNESGKAFNYSSLLRKHQIIHLGEKQYKCDVCGKVFNRKRNLVCHRRCHTGEKPYRCNECGKTFSQTYSLTCHRRLHTGEKPYKCEECDKAFSFKSNLKRHRRIHAGEKPYKCNECGKTFSQTSSLTCHRRLHTGEKPFKCNECGKTFSRKSSLTCHHRLHTGEKPYKCNECGKTFSQELTLKCHRRLHTGEKPYKCNECGKVFNKKANLARHHRLHSGEKPYKCTECVKTFSRNSALVIHKAIHIGEKRYKCNECGKTFSRISALVIHTAIHTGEKPYKCNECGKGFNRKTHLACHHRLHTGEKPYKCNECGKVFNRKTHLAHHHRLHTGDKPYKCNECGKVFNQKAHLARHHRLHTGEKPYKCNECGKVFNQKANLARHHRLHTGEKPYKFNECGKAFN</sequence>
<organism>
    <name type="scientific">Homo sapiens</name>
    <name type="common">Human</name>
    <dbReference type="NCBI Taxonomy" id="9606"/>
    <lineage>
        <taxon>Eukaryota</taxon>
        <taxon>Metazoa</taxon>
        <taxon>Chordata</taxon>
        <taxon>Craniata</taxon>
        <taxon>Vertebrata</taxon>
        <taxon>Euteleostomi</taxon>
        <taxon>Mammalia</taxon>
        <taxon>Eutheria</taxon>
        <taxon>Euarchontoglires</taxon>
        <taxon>Primates</taxon>
        <taxon>Haplorrhini</taxon>
        <taxon>Catarrhini</taxon>
        <taxon>Hominidae</taxon>
        <taxon>Homo</taxon>
    </lineage>
</organism>
<keyword id="KW-0238">DNA-binding</keyword>
<keyword id="KW-0479">Metal-binding</keyword>
<keyword id="KW-0539">Nucleus</keyword>
<keyword id="KW-1267">Proteomics identification</keyword>
<keyword id="KW-1185">Reference proteome</keyword>
<keyword id="KW-0677">Repeat</keyword>
<keyword id="KW-0804">Transcription</keyword>
<keyword id="KW-0805">Transcription regulation</keyword>
<keyword id="KW-0862">Zinc</keyword>
<keyword id="KW-0863">Zinc-finger</keyword>
<accession>Q6ZN06</accession>
<comment type="function">
    <text>May be involved in transcriptional regulation.</text>
</comment>
<comment type="subcellular location">
    <subcellularLocation>
        <location evidence="3">Nucleus</location>
    </subcellularLocation>
</comment>
<comment type="similarity">
    <text evidence="3">Belongs to the krueppel C2H2-type zinc-finger protein family.</text>
</comment>
<comment type="sequence caution" evidence="3">
    <conflict type="erroneous initiation">
        <sequence resource="EMBL-CDS" id="BAD18569"/>
    </conflict>
</comment>
<protein>
    <recommendedName>
        <fullName>Zinc finger protein 813</fullName>
    </recommendedName>
</protein>
<dbReference type="EMBL" id="AC022137">
    <property type="status" value="NOT_ANNOTATED_CDS"/>
    <property type="molecule type" value="Genomic_DNA"/>
</dbReference>
<dbReference type="EMBL" id="AK131422">
    <property type="protein sequence ID" value="BAD18569.1"/>
    <property type="status" value="ALT_INIT"/>
    <property type="molecule type" value="mRNA"/>
</dbReference>
<dbReference type="CCDS" id="CCDS46172.1"/>
<dbReference type="RefSeq" id="NP_001004301.2">
    <property type="nucleotide sequence ID" value="NM_001004301.4"/>
</dbReference>
<dbReference type="SMR" id="Q6ZN06"/>
<dbReference type="BioGRID" id="125948">
    <property type="interactions" value="19"/>
</dbReference>
<dbReference type="FunCoup" id="Q6ZN06">
    <property type="interactions" value="46"/>
</dbReference>
<dbReference type="IntAct" id="Q6ZN06">
    <property type="interactions" value="11"/>
</dbReference>
<dbReference type="STRING" id="9606.ENSP00000379684"/>
<dbReference type="iPTMnet" id="Q6ZN06"/>
<dbReference type="PhosphoSitePlus" id="Q6ZN06"/>
<dbReference type="BioMuta" id="ZNF813"/>
<dbReference type="DMDM" id="152112420"/>
<dbReference type="jPOST" id="Q6ZN06"/>
<dbReference type="MassIVE" id="Q6ZN06"/>
<dbReference type="PaxDb" id="9606-ENSP00000379684"/>
<dbReference type="PeptideAtlas" id="Q6ZN06"/>
<dbReference type="ProteomicsDB" id="67952"/>
<dbReference type="Pumba" id="Q6ZN06"/>
<dbReference type="Antibodypedia" id="67264">
    <property type="antibodies" value="58 antibodies from 14 providers"/>
</dbReference>
<dbReference type="DNASU" id="126017"/>
<dbReference type="Ensembl" id="ENST00000396403.9">
    <property type="protein sequence ID" value="ENSP00000379684.4"/>
    <property type="gene ID" value="ENSG00000198346.11"/>
</dbReference>
<dbReference type="GeneID" id="126017"/>
<dbReference type="KEGG" id="hsa:126017"/>
<dbReference type="MANE-Select" id="ENST00000396403.9">
    <property type="protein sequence ID" value="ENSP00000379684.4"/>
    <property type="RefSeq nucleotide sequence ID" value="NM_001004301.4"/>
    <property type="RefSeq protein sequence ID" value="NP_001004301.2"/>
</dbReference>
<dbReference type="UCSC" id="uc002qbu.3">
    <property type="organism name" value="human"/>
</dbReference>
<dbReference type="AGR" id="HGNC:33257"/>
<dbReference type="CTD" id="126017"/>
<dbReference type="DisGeNET" id="126017"/>
<dbReference type="GeneCards" id="ZNF813"/>
<dbReference type="HGNC" id="HGNC:33257">
    <property type="gene designation" value="ZNF813"/>
</dbReference>
<dbReference type="HPA" id="ENSG00000198346">
    <property type="expression patterns" value="Low tissue specificity"/>
</dbReference>
<dbReference type="neXtProt" id="NX_Q6ZN06"/>
<dbReference type="OpenTargets" id="ENSG00000198346"/>
<dbReference type="PharmGKB" id="PA162410661"/>
<dbReference type="VEuPathDB" id="HostDB:ENSG00000198346"/>
<dbReference type="eggNOG" id="KOG1721">
    <property type="taxonomic scope" value="Eukaryota"/>
</dbReference>
<dbReference type="GeneTree" id="ENSGT00940000154397"/>
<dbReference type="HOGENOM" id="CLU_002678_44_4_1"/>
<dbReference type="InParanoid" id="Q6ZN06"/>
<dbReference type="OMA" id="CISNNYG"/>
<dbReference type="OrthoDB" id="9507676at2759"/>
<dbReference type="PAN-GO" id="Q6ZN06">
    <property type="GO annotations" value="4 GO annotations based on evolutionary models"/>
</dbReference>
<dbReference type="PhylomeDB" id="Q6ZN06"/>
<dbReference type="TreeFam" id="TF341892"/>
<dbReference type="PathwayCommons" id="Q6ZN06"/>
<dbReference type="SignaLink" id="Q6ZN06"/>
<dbReference type="BioGRID-ORCS" id="126017">
    <property type="hits" value="19 hits in 1082 CRISPR screens"/>
</dbReference>
<dbReference type="ChiTaRS" id="ZNF813">
    <property type="organism name" value="human"/>
</dbReference>
<dbReference type="GenomeRNAi" id="126017"/>
<dbReference type="Pharos" id="Q6ZN06">
    <property type="development level" value="Tdark"/>
</dbReference>
<dbReference type="PRO" id="PR:Q6ZN06"/>
<dbReference type="Proteomes" id="UP000005640">
    <property type="component" value="Chromosome 19"/>
</dbReference>
<dbReference type="RNAct" id="Q6ZN06">
    <property type="molecule type" value="protein"/>
</dbReference>
<dbReference type="Bgee" id="ENSG00000198346">
    <property type="expression patterns" value="Expressed in male germ line stem cell (sensu Vertebrata) in testis and 105 other cell types or tissues"/>
</dbReference>
<dbReference type="ExpressionAtlas" id="Q6ZN06">
    <property type="expression patterns" value="baseline and differential"/>
</dbReference>
<dbReference type="GO" id="GO:0005634">
    <property type="term" value="C:nucleus"/>
    <property type="evidence" value="ECO:0000318"/>
    <property type="project" value="GO_Central"/>
</dbReference>
<dbReference type="GO" id="GO:0000981">
    <property type="term" value="F:DNA-binding transcription factor activity, RNA polymerase II-specific"/>
    <property type="evidence" value="ECO:0000318"/>
    <property type="project" value="GO_Central"/>
</dbReference>
<dbReference type="GO" id="GO:0000978">
    <property type="term" value="F:RNA polymerase II cis-regulatory region sequence-specific DNA binding"/>
    <property type="evidence" value="ECO:0000318"/>
    <property type="project" value="GO_Central"/>
</dbReference>
<dbReference type="GO" id="GO:0008270">
    <property type="term" value="F:zinc ion binding"/>
    <property type="evidence" value="ECO:0007669"/>
    <property type="project" value="UniProtKB-KW"/>
</dbReference>
<dbReference type="GO" id="GO:0006357">
    <property type="term" value="P:regulation of transcription by RNA polymerase II"/>
    <property type="evidence" value="ECO:0000318"/>
    <property type="project" value="GO_Central"/>
</dbReference>
<dbReference type="CDD" id="cd07765">
    <property type="entry name" value="KRAB_A-box"/>
    <property type="match status" value="1"/>
</dbReference>
<dbReference type="FunFam" id="3.30.160.60:FF:002209">
    <property type="match status" value="1"/>
</dbReference>
<dbReference type="FunFam" id="3.30.160.60:FF:004137">
    <property type="match status" value="1"/>
</dbReference>
<dbReference type="FunFam" id="3.30.160.60:FF:000745">
    <property type="entry name" value="zinc finger protein 181 isoform X1"/>
    <property type="match status" value="2"/>
</dbReference>
<dbReference type="FunFam" id="3.30.160.60:FF:000295">
    <property type="entry name" value="zinc finger protein 19"/>
    <property type="match status" value="1"/>
</dbReference>
<dbReference type="FunFam" id="3.30.160.60:FF:002343">
    <property type="entry name" value="Zinc finger protein 33A"/>
    <property type="match status" value="1"/>
</dbReference>
<dbReference type="FunFam" id="3.30.160.60:FF:002402">
    <property type="entry name" value="Zinc finger protein 347"/>
    <property type="match status" value="1"/>
</dbReference>
<dbReference type="FunFam" id="3.30.160.60:FF:002090">
    <property type="entry name" value="Zinc finger protein 473"/>
    <property type="match status" value="2"/>
</dbReference>
<dbReference type="FunFam" id="3.30.160.60:FF:000015">
    <property type="entry name" value="Zinc finger protein 569"/>
    <property type="match status" value="2"/>
</dbReference>
<dbReference type="FunFam" id="3.30.160.60:FF:001627">
    <property type="entry name" value="Zinc finger protein 655"/>
    <property type="match status" value="1"/>
</dbReference>
<dbReference type="FunFam" id="3.30.160.60:FF:000188">
    <property type="entry name" value="Zinc finger protein 787"/>
    <property type="match status" value="1"/>
</dbReference>
<dbReference type="FunFam" id="3.30.160.60:FF:002289">
    <property type="entry name" value="Zinc finger protein 813"/>
    <property type="match status" value="1"/>
</dbReference>
<dbReference type="FunFam" id="3.30.160.60:FF:002292">
    <property type="entry name" value="Zinc finger protein 816"/>
    <property type="match status" value="1"/>
</dbReference>
<dbReference type="Gene3D" id="6.10.140.140">
    <property type="match status" value="1"/>
</dbReference>
<dbReference type="Gene3D" id="3.30.160.60">
    <property type="entry name" value="Classic Zinc Finger"/>
    <property type="match status" value="15"/>
</dbReference>
<dbReference type="InterPro" id="IPR001909">
    <property type="entry name" value="KRAB"/>
</dbReference>
<dbReference type="InterPro" id="IPR036051">
    <property type="entry name" value="KRAB_dom_sf"/>
</dbReference>
<dbReference type="InterPro" id="IPR036236">
    <property type="entry name" value="Znf_C2H2_sf"/>
</dbReference>
<dbReference type="InterPro" id="IPR013087">
    <property type="entry name" value="Znf_C2H2_type"/>
</dbReference>
<dbReference type="PANTHER" id="PTHR24399:SF75">
    <property type="entry name" value="ZFP14 ZINC FINGER PROTEIN-RELATED"/>
    <property type="match status" value="1"/>
</dbReference>
<dbReference type="PANTHER" id="PTHR24399">
    <property type="entry name" value="ZINC FINGER AND BTB DOMAIN-CONTAINING"/>
    <property type="match status" value="1"/>
</dbReference>
<dbReference type="Pfam" id="PF01352">
    <property type="entry name" value="KRAB"/>
    <property type="match status" value="1"/>
</dbReference>
<dbReference type="Pfam" id="PF00096">
    <property type="entry name" value="zf-C2H2"/>
    <property type="match status" value="11"/>
</dbReference>
<dbReference type="Pfam" id="PF13912">
    <property type="entry name" value="zf-C2H2_6"/>
    <property type="match status" value="1"/>
</dbReference>
<dbReference type="SMART" id="SM00349">
    <property type="entry name" value="KRAB"/>
    <property type="match status" value="1"/>
</dbReference>
<dbReference type="SMART" id="SM00355">
    <property type="entry name" value="ZnF_C2H2"/>
    <property type="match status" value="14"/>
</dbReference>
<dbReference type="SUPFAM" id="SSF57667">
    <property type="entry name" value="beta-beta-alpha zinc fingers"/>
    <property type="match status" value="8"/>
</dbReference>
<dbReference type="SUPFAM" id="SSF109640">
    <property type="entry name" value="KRAB domain (Kruppel-associated box)"/>
    <property type="match status" value="1"/>
</dbReference>
<dbReference type="PROSITE" id="PS50805">
    <property type="entry name" value="KRAB"/>
    <property type="match status" value="1"/>
</dbReference>
<dbReference type="PROSITE" id="PS00028">
    <property type="entry name" value="ZINC_FINGER_C2H2_1"/>
    <property type="match status" value="13"/>
</dbReference>
<dbReference type="PROSITE" id="PS50157">
    <property type="entry name" value="ZINC_FINGER_C2H2_2"/>
    <property type="match status" value="14"/>
</dbReference>
<reference key="1">
    <citation type="journal article" date="2004" name="Nature">
        <title>The DNA sequence and biology of human chromosome 19.</title>
        <authorList>
            <person name="Grimwood J."/>
            <person name="Gordon L.A."/>
            <person name="Olsen A.S."/>
            <person name="Terry A."/>
            <person name="Schmutz J."/>
            <person name="Lamerdin J.E."/>
            <person name="Hellsten U."/>
            <person name="Goodstein D."/>
            <person name="Couronne O."/>
            <person name="Tran-Gyamfi M."/>
            <person name="Aerts A."/>
            <person name="Altherr M."/>
            <person name="Ashworth L."/>
            <person name="Bajorek E."/>
            <person name="Black S."/>
            <person name="Branscomb E."/>
            <person name="Caenepeel S."/>
            <person name="Carrano A.V."/>
            <person name="Caoile C."/>
            <person name="Chan Y.M."/>
            <person name="Christensen M."/>
            <person name="Cleland C.A."/>
            <person name="Copeland A."/>
            <person name="Dalin E."/>
            <person name="Dehal P."/>
            <person name="Denys M."/>
            <person name="Detter J.C."/>
            <person name="Escobar J."/>
            <person name="Flowers D."/>
            <person name="Fotopulos D."/>
            <person name="Garcia C."/>
            <person name="Georgescu A.M."/>
            <person name="Glavina T."/>
            <person name="Gomez M."/>
            <person name="Gonzales E."/>
            <person name="Groza M."/>
            <person name="Hammon N."/>
            <person name="Hawkins T."/>
            <person name="Haydu L."/>
            <person name="Ho I."/>
            <person name="Huang W."/>
            <person name="Israni S."/>
            <person name="Jett J."/>
            <person name="Kadner K."/>
            <person name="Kimball H."/>
            <person name="Kobayashi A."/>
            <person name="Larionov V."/>
            <person name="Leem S.-H."/>
            <person name="Lopez F."/>
            <person name="Lou Y."/>
            <person name="Lowry S."/>
            <person name="Malfatti S."/>
            <person name="Martinez D."/>
            <person name="McCready P.M."/>
            <person name="Medina C."/>
            <person name="Morgan J."/>
            <person name="Nelson K."/>
            <person name="Nolan M."/>
            <person name="Ovcharenko I."/>
            <person name="Pitluck S."/>
            <person name="Pollard M."/>
            <person name="Popkie A.P."/>
            <person name="Predki P."/>
            <person name="Quan G."/>
            <person name="Ramirez L."/>
            <person name="Rash S."/>
            <person name="Retterer J."/>
            <person name="Rodriguez A."/>
            <person name="Rogers S."/>
            <person name="Salamov A."/>
            <person name="Salazar A."/>
            <person name="She X."/>
            <person name="Smith D."/>
            <person name="Slezak T."/>
            <person name="Solovyev V."/>
            <person name="Thayer N."/>
            <person name="Tice H."/>
            <person name="Tsai M."/>
            <person name="Ustaszewska A."/>
            <person name="Vo N."/>
            <person name="Wagner M."/>
            <person name="Wheeler J."/>
            <person name="Wu K."/>
            <person name="Xie G."/>
            <person name="Yang J."/>
            <person name="Dubchak I."/>
            <person name="Furey T.S."/>
            <person name="DeJong P."/>
            <person name="Dickson M."/>
            <person name="Gordon D."/>
            <person name="Eichler E.E."/>
            <person name="Pennacchio L.A."/>
            <person name="Richardson P."/>
            <person name="Stubbs L."/>
            <person name="Rokhsar D.S."/>
            <person name="Myers R.M."/>
            <person name="Rubin E.M."/>
            <person name="Lucas S.M."/>
        </authorList>
    </citation>
    <scope>NUCLEOTIDE SEQUENCE [LARGE SCALE GENOMIC DNA]</scope>
</reference>
<reference key="2">
    <citation type="journal article" date="2004" name="Nat. Genet.">
        <title>Complete sequencing and characterization of 21,243 full-length human cDNAs.</title>
        <authorList>
            <person name="Ota T."/>
            <person name="Suzuki Y."/>
            <person name="Nishikawa T."/>
            <person name="Otsuki T."/>
            <person name="Sugiyama T."/>
            <person name="Irie R."/>
            <person name="Wakamatsu A."/>
            <person name="Hayashi K."/>
            <person name="Sato H."/>
            <person name="Nagai K."/>
            <person name="Kimura K."/>
            <person name="Makita H."/>
            <person name="Sekine M."/>
            <person name="Obayashi M."/>
            <person name="Nishi T."/>
            <person name="Shibahara T."/>
            <person name="Tanaka T."/>
            <person name="Ishii S."/>
            <person name="Yamamoto J."/>
            <person name="Saito K."/>
            <person name="Kawai Y."/>
            <person name="Isono Y."/>
            <person name="Nakamura Y."/>
            <person name="Nagahari K."/>
            <person name="Murakami K."/>
            <person name="Yasuda T."/>
            <person name="Iwayanagi T."/>
            <person name="Wagatsuma M."/>
            <person name="Shiratori A."/>
            <person name="Sudo H."/>
            <person name="Hosoiri T."/>
            <person name="Kaku Y."/>
            <person name="Kodaira H."/>
            <person name="Kondo H."/>
            <person name="Sugawara M."/>
            <person name="Takahashi M."/>
            <person name="Kanda K."/>
            <person name="Yokoi T."/>
            <person name="Furuya T."/>
            <person name="Kikkawa E."/>
            <person name="Omura Y."/>
            <person name="Abe K."/>
            <person name="Kamihara K."/>
            <person name="Katsuta N."/>
            <person name="Sato K."/>
            <person name="Tanikawa M."/>
            <person name="Yamazaki M."/>
            <person name="Ninomiya K."/>
            <person name="Ishibashi T."/>
            <person name="Yamashita H."/>
            <person name="Murakawa K."/>
            <person name="Fujimori K."/>
            <person name="Tanai H."/>
            <person name="Kimata M."/>
            <person name="Watanabe M."/>
            <person name="Hiraoka S."/>
            <person name="Chiba Y."/>
            <person name="Ishida S."/>
            <person name="Ono Y."/>
            <person name="Takiguchi S."/>
            <person name="Watanabe S."/>
            <person name="Yosida M."/>
            <person name="Hotuta T."/>
            <person name="Kusano J."/>
            <person name="Kanehori K."/>
            <person name="Takahashi-Fujii A."/>
            <person name="Hara H."/>
            <person name="Tanase T.-O."/>
            <person name="Nomura Y."/>
            <person name="Togiya S."/>
            <person name="Komai F."/>
            <person name="Hara R."/>
            <person name="Takeuchi K."/>
            <person name="Arita M."/>
            <person name="Imose N."/>
            <person name="Musashino K."/>
            <person name="Yuuki H."/>
            <person name="Oshima A."/>
            <person name="Sasaki N."/>
            <person name="Aotsuka S."/>
            <person name="Yoshikawa Y."/>
            <person name="Matsunawa H."/>
            <person name="Ichihara T."/>
            <person name="Shiohata N."/>
            <person name="Sano S."/>
            <person name="Moriya S."/>
            <person name="Momiyama H."/>
            <person name="Satoh N."/>
            <person name="Takami S."/>
            <person name="Terashima Y."/>
            <person name="Suzuki O."/>
            <person name="Nakagawa S."/>
            <person name="Senoh A."/>
            <person name="Mizoguchi H."/>
            <person name="Goto Y."/>
            <person name="Shimizu F."/>
            <person name="Wakebe H."/>
            <person name="Hishigaki H."/>
            <person name="Watanabe T."/>
            <person name="Sugiyama A."/>
            <person name="Takemoto M."/>
            <person name="Kawakami B."/>
            <person name="Yamazaki M."/>
            <person name="Watanabe K."/>
            <person name="Kumagai A."/>
            <person name="Itakura S."/>
            <person name="Fukuzumi Y."/>
            <person name="Fujimori Y."/>
            <person name="Komiyama M."/>
            <person name="Tashiro H."/>
            <person name="Tanigami A."/>
            <person name="Fujiwara T."/>
            <person name="Ono T."/>
            <person name="Yamada K."/>
            <person name="Fujii Y."/>
            <person name="Ozaki K."/>
            <person name="Hirao M."/>
            <person name="Ohmori Y."/>
            <person name="Kawabata A."/>
            <person name="Hikiji T."/>
            <person name="Kobatake N."/>
            <person name="Inagaki H."/>
            <person name="Ikema Y."/>
            <person name="Okamoto S."/>
            <person name="Okitani R."/>
            <person name="Kawakami T."/>
            <person name="Noguchi S."/>
            <person name="Itoh T."/>
            <person name="Shigeta K."/>
            <person name="Senba T."/>
            <person name="Matsumura K."/>
            <person name="Nakajima Y."/>
            <person name="Mizuno T."/>
            <person name="Morinaga M."/>
            <person name="Sasaki M."/>
            <person name="Togashi T."/>
            <person name="Oyama M."/>
            <person name="Hata H."/>
            <person name="Watanabe M."/>
            <person name="Komatsu T."/>
            <person name="Mizushima-Sugano J."/>
            <person name="Satoh T."/>
            <person name="Shirai Y."/>
            <person name="Takahashi Y."/>
            <person name="Nakagawa K."/>
            <person name="Okumura K."/>
            <person name="Nagase T."/>
            <person name="Nomura N."/>
            <person name="Kikuchi H."/>
            <person name="Masuho Y."/>
            <person name="Yamashita R."/>
            <person name="Nakai K."/>
            <person name="Yada T."/>
            <person name="Nakamura Y."/>
            <person name="Ohara O."/>
            <person name="Isogai T."/>
            <person name="Sugano S."/>
        </authorList>
    </citation>
    <scope>NUCLEOTIDE SEQUENCE [LARGE SCALE MRNA] OF 164-617</scope>
    <source>
        <tissue>Brain</tissue>
    </source>
</reference>
<feature type="chain" id="PRO_0000294363" description="Zinc finger protein 813">
    <location>
        <begin position="1"/>
        <end position="617"/>
    </location>
</feature>
<feature type="domain" description="KRAB" evidence="2">
    <location>
        <begin position="8"/>
        <end position="81"/>
    </location>
</feature>
<feature type="zinc finger region" description="C2H2-type 1; degenerate" evidence="1">
    <location>
        <begin position="215"/>
        <end position="237"/>
    </location>
</feature>
<feature type="zinc finger region" description="C2H2-type 2" evidence="1">
    <location>
        <begin position="243"/>
        <end position="265"/>
    </location>
</feature>
<feature type="zinc finger region" description="C2H2-type 3" evidence="1">
    <location>
        <begin position="271"/>
        <end position="293"/>
    </location>
</feature>
<feature type="zinc finger region" description="C2H2-type 4" evidence="1">
    <location>
        <begin position="299"/>
        <end position="321"/>
    </location>
</feature>
<feature type="zinc finger region" description="C2H2-type 5" evidence="1">
    <location>
        <begin position="327"/>
        <end position="349"/>
    </location>
</feature>
<feature type="zinc finger region" description="C2H2-type 6" evidence="1">
    <location>
        <begin position="355"/>
        <end position="377"/>
    </location>
</feature>
<feature type="zinc finger region" description="C2H2-type 7" evidence="1">
    <location>
        <begin position="383"/>
        <end position="405"/>
    </location>
</feature>
<feature type="zinc finger region" description="C2H2-type 8" evidence="1">
    <location>
        <begin position="411"/>
        <end position="433"/>
    </location>
</feature>
<feature type="zinc finger region" description="C2H2-type 9" evidence="1">
    <location>
        <begin position="439"/>
        <end position="461"/>
    </location>
</feature>
<feature type="zinc finger region" description="C2H2-type 10" evidence="1">
    <location>
        <begin position="467"/>
        <end position="489"/>
    </location>
</feature>
<feature type="zinc finger region" description="C2H2-type 11" evidence="1">
    <location>
        <begin position="495"/>
        <end position="517"/>
    </location>
</feature>
<feature type="zinc finger region" description="C2H2-type 12" evidence="1">
    <location>
        <begin position="523"/>
        <end position="545"/>
    </location>
</feature>
<feature type="zinc finger region" description="C2H2-type 13" evidence="1">
    <location>
        <begin position="551"/>
        <end position="573"/>
    </location>
</feature>
<feature type="zinc finger region" description="C2H2-type 14" evidence="1">
    <location>
        <begin position="579"/>
        <end position="601"/>
    </location>
</feature>
<feature type="sequence variant" id="VAR_052905" description="In dbSNP:rs2617667.">
    <original>A</original>
    <variation>T</variation>
    <location>
        <position position="62"/>
    </location>
</feature>
<feature type="sequence variant" id="VAR_052906" description="In dbSNP:rs12609217.">
    <original>D</original>
    <variation>V</variation>
    <location>
        <position position="93"/>
    </location>
</feature>
<feature type="sequence variant" id="VAR_052907" description="In dbSNP:rs12460628.">
    <original>I</original>
    <variation>F</variation>
    <location>
        <position position="168"/>
    </location>
</feature>
<feature type="sequence variant" id="VAR_052908" description="In dbSNP:rs3859494.">
    <original>Y</original>
    <variation>C</variation>
    <location>
        <position position="192"/>
    </location>
</feature>
<feature type="sequence variant" id="VAR_033167" description="In dbSNP:rs10421308.">
    <original>R</original>
    <variation>K</variation>
    <location>
        <position position="231"/>
    </location>
</feature>
<feature type="sequence variant" id="VAR_033168" description="In dbSNP:rs10422163.">
    <original>Y</original>
    <variation>F</variation>
    <location>
        <position position="439"/>
    </location>
</feature>